<reference key="1">
    <citation type="journal article" date="2006" name="Proc. Natl. Acad. Sci. U.S.A.">
        <title>The partitioned Rhizobium etli genome: genetic and metabolic redundancy in seven interacting replicons.</title>
        <authorList>
            <person name="Gonzalez V."/>
            <person name="Santamaria R.I."/>
            <person name="Bustos P."/>
            <person name="Hernandez-Gonzalez I."/>
            <person name="Medrano-Soto A."/>
            <person name="Moreno-Hagelsieb G."/>
            <person name="Janga S.C."/>
            <person name="Ramirez M.A."/>
            <person name="Jimenez-Jacinto V."/>
            <person name="Collado-Vides J."/>
            <person name="Davila G."/>
        </authorList>
    </citation>
    <scope>NUCLEOTIDE SEQUENCE [LARGE SCALE GENOMIC DNA]</scope>
    <source>
        <strain>ATCC 51251 / DSM 11541 / JCM 21823 / NBRC 15573 / CFN 42</strain>
    </source>
</reference>
<dbReference type="EMBL" id="CP000133">
    <property type="protein sequence ID" value="ABC89976.1"/>
    <property type="molecule type" value="Genomic_DNA"/>
</dbReference>
<dbReference type="SMR" id="Q2KB10"/>
<dbReference type="KEGG" id="ret:RHE_CH01171"/>
<dbReference type="eggNOG" id="COG0828">
    <property type="taxonomic scope" value="Bacteria"/>
</dbReference>
<dbReference type="HOGENOM" id="CLU_159258_0_1_5"/>
<dbReference type="OrthoDB" id="9811907at2"/>
<dbReference type="Proteomes" id="UP000001936">
    <property type="component" value="Chromosome"/>
</dbReference>
<dbReference type="GO" id="GO:1990904">
    <property type="term" value="C:ribonucleoprotein complex"/>
    <property type="evidence" value="ECO:0007669"/>
    <property type="project" value="UniProtKB-KW"/>
</dbReference>
<dbReference type="GO" id="GO:0005840">
    <property type="term" value="C:ribosome"/>
    <property type="evidence" value="ECO:0007669"/>
    <property type="project" value="UniProtKB-KW"/>
</dbReference>
<dbReference type="GO" id="GO:0003735">
    <property type="term" value="F:structural constituent of ribosome"/>
    <property type="evidence" value="ECO:0007669"/>
    <property type="project" value="InterPro"/>
</dbReference>
<dbReference type="GO" id="GO:0006412">
    <property type="term" value="P:translation"/>
    <property type="evidence" value="ECO:0007669"/>
    <property type="project" value="UniProtKB-UniRule"/>
</dbReference>
<dbReference type="Gene3D" id="1.20.5.1150">
    <property type="entry name" value="Ribosomal protein S8"/>
    <property type="match status" value="1"/>
</dbReference>
<dbReference type="HAMAP" id="MF_00358">
    <property type="entry name" value="Ribosomal_bS21"/>
    <property type="match status" value="1"/>
</dbReference>
<dbReference type="InterPro" id="IPR001911">
    <property type="entry name" value="Ribosomal_bS21"/>
</dbReference>
<dbReference type="InterPro" id="IPR038380">
    <property type="entry name" value="Ribosomal_bS21_sf"/>
</dbReference>
<dbReference type="NCBIfam" id="TIGR00030">
    <property type="entry name" value="S21p"/>
    <property type="match status" value="1"/>
</dbReference>
<dbReference type="PANTHER" id="PTHR21109">
    <property type="entry name" value="MITOCHONDRIAL 28S RIBOSOMAL PROTEIN S21"/>
    <property type="match status" value="1"/>
</dbReference>
<dbReference type="PANTHER" id="PTHR21109:SF0">
    <property type="entry name" value="SMALL RIBOSOMAL SUBUNIT PROTEIN BS21M"/>
    <property type="match status" value="1"/>
</dbReference>
<dbReference type="Pfam" id="PF01165">
    <property type="entry name" value="Ribosomal_S21"/>
    <property type="match status" value="1"/>
</dbReference>
<comment type="similarity">
    <text evidence="1">Belongs to the bacterial ribosomal protein bS21 family.</text>
</comment>
<proteinExistence type="inferred from homology"/>
<sequence length="78" mass="9226">MQVLVRDNNVDQALRVLKKKMQREGLFREMKARSAYEKPSEKRAREKGEAVRRQRKLARKKLQREGLLPAPKKAVRAR</sequence>
<keyword id="KW-1185">Reference proteome</keyword>
<keyword id="KW-0687">Ribonucleoprotein</keyword>
<keyword id="KW-0689">Ribosomal protein</keyword>
<name>RS211_RHIEC</name>
<feature type="chain" id="PRO_0000266744" description="Small ribosomal subunit protein bS21A">
    <location>
        <begin position="1"/>
        <end position="78"/>
    </location>
</feature>
<feature type="region of interest" description="Disordered" evidence="2">
    <location>
        <begin position="30"/>
        <end position="78"/>
    </location>
</feature>
<feature type="compositionally biased region" description="Basic and acidic residues" evidence="2">
    <location>
        <begin position="30"/>
        <end position="52"/>
    </location>
</feature>
<feature type="compositionally biased region" description="Basic residues" evidence="2">
    <location>
        <begin position="53"/>
        <end position="62"/>
    </location>
</feature>
<accession>Q2KB10</accession>
<organism>
    <name type="scientific">Rhizobium etli (strain ATCC 51251 / DSM 11541 / JCM 21823 / NBRC 15573 / CFN 42)</name>
    <dbReference type="NCBI Taxonomy" id="347834"/>
    <lineage>
        <taxon>Bacteria</taxon>
        <taxon>Pseudomonadati</taxon>
        <taxon>Pseudomonadota</taxon>
        <taxon>Alphaproteobacteria</taxon>
        <taxon>Hyphomicrobiales</taxon>
        <taxon>Rhizobiaceae</taxon>
        <taxon>Rhizobium/Agrobacterium group</taxon>
        <taxon>Rhizobium</taxon>
    </lineage>
</organism>
<evidence type="ECO:0000255" key="1">
    <source>
        <dbReference type="HAMAP-Rule" id="MF_00358"/>
    </source>
</evidence>
<evidence type="ECO:0000256" key="2">
    <source>
        <dbReference type="SAM" id="MobiDB-lite"/>
    </source>
</evidence>
<evidence type="ECO:0000305" key="3"/>
<protein>
    <recommendedName>
        <fullName evidence="1">Small ribosomal subunit protein bS21A</fullName>
    </recommendedName>
    <alternativeName>
        <fullName evidence="3">30S ribosomal protein S21 1</fullName>
    </alternativeName>
</protein>
<gene>
    <name evidence="1" type="primary">rpsU1</name>
    <name type="ordered locus">RHE_CH01171</name>
</gene>